<protein>
    <recommendedName>
        <fullName evidence="1">Heptaprenylglyceryl phosphate synthase</fullName>
        <shortName evidence="1">HepGP synthase</shortName>
        <ecNumber evidence="1">2.5.1.n9</ecNumber>
    </recommendedName>
    <alternativeName>
        <fullName evidence="1">Glycerol-1-phosphate heptaprenyltransferase</fullName>
    </alternativeName>
</protein>
<keyword id="KW-0444">Lipid biosynthesis</keyword>
<keyword id="KW-0443">Lipid metabolism</keyword>
<keyword id="KW-0460">Magnesium</keyword>
<keyword id="KW-0479">Metal-binding</keyword>
<keyword id="KW-0594">Phospholipid biosynthesis</keyword>
<keyword id="KW-1208">Phospholipid metabolism</keyword>
<keyword id="KW-0808">Transferase</keyword>
<reference key="1">
    <citation type="journal article" date="2006" name="Lancet">
        <title>Complete genome sequence of USA300, an epidemic clone of community-acquired meticillin-resistant Staphylococcus aureus.</title>
        <authorList>
            <person name="Diep B.A."/>
            <person name="Gill S.R."/>
            <person name="Chang R.F."/>
            <person name="Phan T.H."/>
            <person name="Chen J.H."/>
            <person name="Davidson M.G."/>
            <person name="Lin F."/>
            <person name="Lin J."/>
            <person name="Carleton H.A."/>
            <person name="Mongodin E.F."/>
            <person name="Sensabaugh G.F."/>
            <person name="Perdreau-Remington F."/>
        </authorList>
    </citation>
    <scope>NUCLEOTIDE SEQUENCE [LARGE SCALE GENOMIC DNA]</scope>
    <source>
        <strain>USA300</strain>
    </source>
</reference>
<accession>Q2FFI9</accession>
<organism>
    <name type="scientific">Staphylococcus aureus (strain USA300)</name>
    <dbReference type="NCBI Taxonomy" id="367830"/>
    <lineage>
        <taxon>Bacteria</taxon>
        <taxon>Bacillati</taxon>
        <taxon>Bacillota</taxon>
        <taxon>Bacilli</taxon>
        <taxon>Bacillales</taxon>
        <taxon>Staphylococcaceae</taxon>
        <taxon>Staphylococcus</taxon>
    </lineage>
</organism>
<gene>
    <name evidence="1" type="primary">pcrB</name>
    <name type="ordered locus">SAUSA300_1887</name>
</gene>
<evidence type="ECO:0000255" key="1">
    <source>
        <dbReference type="HAMAP-Rule" id="MF_00112"/>
    </source>
</evidence>
<name>PCRB_STAA3</name>
<comment type="function">
    <text evidence="1">Prenyltransferase that catalyzes in vivo the transfer of the heptaprenyl moiety of heptaprenyl pyrophosphate (HepPP; 35 carbon atoms) to the C3 hydroxyl of sn-glycerol-1-phosphate (G1P), producing heptaprenylglyceryl phosphate (HepGP). This reaction is an ether-bond-formation step in the biosynthesis of archaea-type G1P-based membrane lipids found in Bacillales.</text>
</comment>
<comment type="catalytic activity">
    <reaction evidence="1">
        <text>sn-glycerol 1-phosphate + all-trans-heptaprenyl diphosphate = 3-heptaprenyl-sn-glycero-1-phosphate + diphosphate</text>
        <dbReference type="Rhea" id="RHEA:33495"/>
        <dbReference type="ChEBI" id="CHEBI:33019"/>
        <dbReference type="ChEBI" id="CHEBI:57685"/>
        <dbReference type="ChEBI" id="CHEBI:58206"/>
        <dbReference type="ChEBI" id="CHEBI:64781"/>
        <dbReference type="EC" id="2.5.1.n9"/>
    </reaction>
</comment>
<comment type="cofactor">
    <cofactor evidence="1">
        <name>Mg(2+)</name>
        <dbReference type="ChEBI" id="CHEBI:18420"/>
    </cofactor>
</comment>
<comment type="pathway">
    <text evidence="1">Membrane lipid metabolism; glycerophospholipid metabolism.</text>
</comment>
<comment type="subunit">
    <text evidence="1">Homodimer.</text>
</comment>
<comment type="similarity">
    <text evidence="1">Belongs to the GGGP/HepGP synthase family. Group I subfamily.</text>
</comment>
<feature type="chain" id="PRO_0000304182" description="Heptaprenylglyceryl phosphate synthase">
    <location>
        <begin position="1"/>
        <end position="230"/>
    </location>
</feature>
<feature type="binding site" evidence="1">
    <location>
        <position position="12"/>
    </location>
    <ligand>
        <name>sn-glycerol 1-phosphate</name>
        <dbReference type="ChEBI" id="CHEBI:57685"/>
    </ligand>
</feature>
<feature type="binding site" evidence="1">
    <location>
        <position position="14"/>
    </location>
    <ligand>
        <name>Mg(2+)</name>
        <dbReference type="ChEBI" id="CHEBI:18420"/>
    </ligand>
</feature>
<feature type="binding site" evidence="1">
    <location>
        <position position="40"/>
    </location>
    <ligand>
        <name>Mg(2+)</name>
        <dbReference type="ChEBI" id="CHEBI:18420"/>
    </ligand>
</feature>
<feature type="binding site" evidence="1">
    <location>
        <begin position="159"/>
        <end position="164"/>
    </location>
    <ligand>
        <name>sn-glycerol 1-phosphate</name>
        <dbReference type="ChEBI" id="CHEBI:57685"/>
    </ligand>
</feature>
<feature type="binding site" evidence="1">
    <location>
        <position position="189"/>
    </location>
    <ligand>
        <name>sn-glycerol 1-phosphate</name>
        <dbReference type="ChEBI" id="CHEBI:57685"/>
    </ligand>
</feature>
<feature type="binding site" evidence="1">
    <location>
        <begin position="209"/>
        <end position="210"/>
    </location>
    <ligand>
        <name>sn-glycerol 1-phosphate</name>
        <dbReference type="ChEBI" id="CHEBI:57685"/>
    </ligand>
</feature>
<dbReference type="EC" id="2.5.1.n9" evidence="1"/>
<dbReference type="EMBL" id="CP000255">
    <property type="protein sequence ID" value="ABD21509.1"/>
    <property type="molecule type" value="Genomic_DNA"/>
</dbReference>
<dbReference type="RefSeq" id="WP_000272069.1">
    <property type="nucleotide sequence ID" value="NZ_CP027476.1"/>
</dbReference>
<dbReference type="SMR" id="Q2FFI9"/>
<dbReference type="KEGG" id="saa:SAUSA300_1887"/>
<dbReference type="HOGENOM" id="CLU_095211_0_0_9"/>
<dbReference type="OMA" id="TGAHKEW"/>
<dbReference type="UniPathway" id="UPA00940"/>
<dbReference type="Proteomes" id="UP000001939">
    <property type="component" value="Chromosome"/>
</dbReference>
<dbReference type="GO" id="GO:0120536">
    <property type="term" value="F:heptaprenylglyceryl phosphate synthase activity"/>
    <property type="evidence" value="ECO:0007669"/>
    <property type="project" value="RHEA"/>
</dbReference>
<dbReference type="GO" id="GO:0000287">
    <property type="term" value="F:magnesium ion binding"/>
    <property type="evidence" value="ECO:0007669"/>
    <property type="project" value="UniProtKB-UniRule"/>
</dbReference>
<dbReference type="GO" id="GO:0046474">
    <property type="term" value="P:glycerophospholipid biosynthetic process"/>
    <property type="evidence" value="ECO:0007669"/>
    <property type="project" value="UniProtKB-UniRule"/>
</dbReference>
<dbReference type="CDD" id="cd02812">
    <property type="entry name" value="PcrB_like"/>
    <property type="match status" value="1"/>
</dbReference>
<dbReference type="FunFam" id="3.20.20.390:FF:000001">
    <property type="entry name" value="Heptaprenylglyceryl phosphate synthase"/>
    <property type="match status" value="1"/>
</dbReference>
<dbReference type="Gene3D" id="3.20.20.390">
    <property type="entry name" value="FMN-linked oxidoreductases"/>
    <property type="match status" value="1"/>
</dbReference>
<dbReference type="HAMAP" id="MF_00112">
    <property type="entry name" value="GGGP_HepGP_synthase"/>
    <property type="match status" value="1"/>
</dbReference>
<dbReference type="InterPro" id="IPR039074">
    <property type="entry name" value="GGGP/HepGP_synthase_I"/>
</dbReference>
<dbReference type="InterPro" id="IPR038597">
    <property type="entry name" value="GGGP/HepGP_synthase_sf"/>
</dbReference>
<dbReference type="InterPro" id="IPR008205">
    <property type="entry name" value="GGGP_HepGP_synthase"/>
</dbReference>
<dbReference type="NCBIfam" id="TIGR01768">
    <property type="entry name" value="GGGP-family"/>
    <property type="match status" value="1"/>
</dbReference>
<dbReference type="NCBIfam" id="NF003197">
    <property type="entry name" value="PRK04169.1-1"/>
    <property type="match status" value="1"/>
</dbReference>
<dbReference type="NCBIfam" id="NF003199">
    <property type="entry name" value="PRK04169.1-3"/>
    <property type="match status" value="1"/>
</dbReference>
<dbReference type="NCBIfam" id="NF003200">
    <property type="entry name" value="PRK04169.1-4"/>
    <property type="match status" value="1"/>
</dbReference>
<dbReference type="PANTHER" id="PTHR40029">
    <property type="match status" value="1"/>
</dbReference>
<dbReference type="PANTHER" id="PTHR40029:SF2">
    <property type="entry name" value="HEPTAPRENYLGLYCERYL PHOSPHATE SYNTHASE"/>
    <property type="match status" value="1"/>
</dbReference>
<dbReference type="Pfam" id="PF01884">
    <property type="entry name" value="PcrB"/>
    <property type="match status" value="1"/>
</dbReference>
<dbReference type="SUPFAM" id="SSF51395">
    <property type="entry name" value="FMN-linked oxidoreductases"/>
    <property type="match status" value="1"/>
</dbReference>
<sequence>MYDIKKWRHIFKLDPAKHISDDDLDAICMSQTDAIMIGGTDDVTEDNVIHLMSRVRRYPLPLVLEISNIESVMPGFDFYFVPTVLNSTDVVFHNGTLLEALKTYGHSIDFEEVIFEGYVVCNADSKMAKHTKANTDLTTEDLEAYAQMVNHMYRLPVMYIEYSGIYGDVSKVQAVSEHLTETQLFYGGGISSEQQATEMAAIADTIIVGDIIYKDIKKALKTVKIKESSK</sequence>
<proteinExistence type="inferred from homology"/>